<feature type="chain" id="PRO_1000211745" description="Ribulokinase">
    <location>
        <begin position="1"/>
        <end position="566"/>
    </location>
</feature>
<keyword id="KW-0054">Arabinose catabolism</keyword>
<keyword id="KW-0067">ATP-binding</keyword>
<keyword id="KW-0119">Carbohydrate metabolism</keyword>
<keyword id="KW-0418">Kinase</keyword>
<keyword id="KW-0547">Nucleotide-binding</keyword>
<keyword id="KW-0808">Transferase</keyword>
<dbReference type="EC" id="2.7.1.16" evidence="1"/>
<dbReference type="EMBL" id="CP001657">
    <property type="protein sequence ID" value="ACT13069.1"/>
    <property type="molecule type" value="Genomic_DNA"/>
</dbReference>
<dbReference type="RefSeq" id="WP_015840262.1">
    <property type="nucleotide sequence ID" value="NC_012917.1"/>
</dbReference>
<dbReference type="SMR" id="C6DH20"/>
<dbReference type="STRING" id="561230.PC1_2028"/>
<dbReference type="KEGG" id="pct:PC1_2028"/>
<dbReference type="eggNOG" id="COG1069">
    <property type="taxonomic scope" value="Bacteria"/>
</dbReference>
<dbReference type="HOGENOM" id="CLU_009281_9_1_6"/>
<dbReference type="OrthoDB" id="9805576at2"/>
<dbReference type="UniPathway" id="UPA00145">
    <property type="reaction ID" value="UER00566"/>
</dbReference>
<dbReference type="Proteomes" id="UP000002736">
    <property type="component" value="Chromosome"/>
</dbReference>
<dbReference type="GO" id="GO:0005737">
    <property type="term" value="C:cytoplasm"/>
    <property type="evidence" value="ECO:0007669"/>
    <property type="project" value="TreeGrafter"/>
</dbReference>
<dbReference type="GO" id="GO:0005524">
    <property type="term" value="F:ATP binding"/>
    <property type="evidence" value="ECO:0007669"/>
    <property type="project" value="UniProtKB-KW"/>
</dbReference>
<dbReference type="GO" id="GO:0019150">
    <property type="term" value="F:D-ribulokinase activity"/>
    <property type="evidence" value="ECO:0007669"/>
    <property type="project" value="TreeGrafter"/>
</dbReference>
<dbReference type="GO" id="GO:0008741">
    <property type="term" value="F:ribulokinase activity"/>
    <property type="evidence" value="ECO:0007669"/>
    <property type="project" value="UniProtKB-UniRule"/>
</dbReference>
<dbReference type="GO" id="GO:0019569">
    <property type="term" value="P:L-arabinose catabolic process to xylulose 5-phosphate"/>
    <property type="evidence" value="ECO:0007669"/>
    <property type="project" value="UniProtKB-UniRule"/>
</dbReference>
<dbReference type="CDD" id="cd07781">
    <property type="entry name" value="ASKHA_NBD_FGGY_L-RBK"/>
    <property type="match status" value="1"/>
</dbReference>
<dbReference type="Gene3D" id="1.20.58.2240">
    <property type="match status" value="1"/>
</dbReference>
<dbReference type="Gene3D" id="3.30.420.40">
    <property type="match status" value="1"/>
</dbReference>
<dbReference type="HAMAP" id="MF_00520">
    <property type="entry name" value="Ribulokinase"/>
    <property type="match status" value="1"/>
</dbReference>
<dbReference type="InterPro" id="IPR043129">
    <property type="entry name" value="ATPase_NBD"/>
</dbReference>
<dbReference type="InterPro" id="IPR018485">
    <property type="entry name" value="FGGY_C"/>
</dbReference>
<dbReference type="InterPro" id="IPR005929">
    <property type="entry name" value="Ribulokinase"/>
</dbReference>
<dbReference type="NCBIfam" id="TIGR01234">
    <property type="entry name" value="L-ribulokinase"/>
    <property type="match status" value="1"/>
</dbReference>
<dbReference type="NCBIfam" id="NF003154">
    <property type="entry name" value="PRK04123.1"/>
    <property type="match status" value="1"/>
</dbReference>
<dbReference type="PANTHER" id="PTHR43435:SF4">
    <property type="entry name" value="FGGY CARBOHYDRATE KINASE DOMAIN-CONTAINING PROTEIN"/>
    <property type="match status" value="1"/>
</dbReference>
<dbReference type="PANTHER" id="PTHR43435">
    <property type="entry name" value="RIBULOKINASE"/>
    <property type="match status" value="1"/>
</dbReference>
<dbReference type="Pfam" id="PF02782">
    <property type="entry name" value="FGGY_C"/>
    <property type="match status" value="1"/>
</dbReference>
<dbReference type="SUPFAM" id="SSF53067">
    <property type="entry name" value="Actin-like ATPase domain"/>
    <property type="match status" value="2"/>
</dbReference>
<proteinExistence type="inferred from homology"/>
<name>ARAB_PECCP</name>
<gene>
    <name evidence="1" type="primary">araB</name>
    <name type="ordered locus">PC1_2028</name>
</gene>
<protein>
    <recommendedName>
        <fullName evidence="1">Ribulokinase</fullName>
        <ecNumber evidence="1">2.7.1.16</ecNumber>
    </recommendedName>
</protein>
<comment type="catalytic activity">
    <reaction evidence="1">
        <text>D-ribulose + ATP = D-ribulose 5-phosphate + ADP + H(+)</text>
        <dbReference type="Rhea" id="RHEA:17601"/>
        <dbReference type="ChEBI" id="CHEBI:15378"/>
        <dbReference type="ChEBI" id="CHEBI:17173"/>
        <dbReference type="ChEBI" id="CHEBI:30616"/>
        <dbReference type="ChEBI" id="CHEBI:58121"/>
        <dbReference type="ChEBI" id="CHEBI:456216"/>
        <dbReference type="EC" id="2.7.1.16"/>
    </reaction>
</comment>
<comment type="catalytic activity">
    <reaction evidence="1">
        <text>L-ribulose + ATP = L-ribulose 5-phosphate + ADP + H(+)</text>
        <dbReference type="Rhea" id="RHEA:22072"/>
        <dbReference type="ChEBI" id="CHEBI:15378"/>
        <dbReference type="ChEBI" id="CHEBI:16880"/>
        <dbReference type="ChEBI" id="CHEBI:30616"/>
        <dbReference type="ChEBI" id="CHEBI:58226"/>
        <dbReference type="ChEBI" id="CHEBI:456216"/>
        <dbReference type="EC" id="2.7.1.16"/>
    </reaction>
</comment>
<comment type="pathway">
    <text evidence="1">Carbohydrate degradation; L-arabinose degradation via L-ribulose; D-xylulose 5-phosphate from L-arabinose (bacterial route): step 2/3.</text>
</comment>
<comment type="similarity">
    <text evidence="1">Belongs to the ribulokinase family.</text>
</comment>
<reference key="1">
    <citation type="submission" date="2009-07" db="EMBL/GenBank/DDBJ databases">
        <title>Complete sequence of Pectobacterium carotovorum subsp. carotovorum PC1.</title>
        <authorList>
            <consortium name="US DOE Joint Genome Institute"/>
            <person name="Lucas S."/>
            <person name="Copeland A."/>
            <person name="Lapidus A."/>
            <person name="Glavina del Rio T."/>
            <person name="Tice H."/>
            <person name="Bruce D."/>
            <person name="Goodwin L."/>
            <person name="Pitluck S."/>
            <person name="Munk A.C."/>
            <person name="Brettin T."/>
            <person name="Detter J.C."/>
            <person name="Han C."/>
            <person name="Tapia R."/>
            <person name="Larimer F."/>
            <person name="Land M."/>
            <person name="Hauser L."/>
            <person name="Kyrpides N."/>
            <person name="Mikhailova N."/>
            <person name="Balakrishnan V."/>
            <person name="Glasner J."/>
            <person name="Perna N.T."/>
        </authorList>
    </citation>
    <scope>NUCLEOTIDE SEQUENCE [LARGE SCALE GENOMIC DNA]</scope>
    <source>
        <strain>PC1</strain>
    </source>
</reference>
<evidence type="ECO:0000255" key="1">
    <source>
        <dbReference type="HAMAP-Rule" id="MF_00520"/>
    </source>
</evidence>
<sequence length="566" mass="61892">MSAGAITIGLDFGSDSVRALAVDCQSGQELETEVVYYPRWREGKYCQPANNQFRHHPLDYIESLEQAIKVVVSRLTNEQRQHIIGIGVDSTGSTPAPIDEHGQILALRPEFADNPNAMFVLWKDHTAIEEAEAINTLCRSGQFPDYTRYIGGVYSSEWFWAKILHVSREDAAVRQAAVSWIELCDWVPALLSGTQAPADIRRGRCSAGHKSLWHPSWGGLPPKDFLHALDPCLTETLQYPLFTDTWTAEQPVGTITAEWAQRLGIPETVILAGGAFDCHVGTVGAGAQPYTLVKVIGTSTCDILIADDARIADRTIAGICGQVDGSVIPGYIGLEAGQSAFGDMYAWFGRLLGWSLQEAAKDYAEQGHPELKTSLQAMEAKLLERLTRCWAENPTLDHLPVVLDWFNGRRTPFANQRLKGVITDLNLGTDAPTLFGGFIAATAFGARAIMECFEDQGVPVENVLALGGIARKSPVIMQVCTDVMNRPLQIVASDQCCALGAAIFAAVAAGVHCDIPTAQQHMASGIERTLMPDSQRVARYQQLYARYQQWCRLAEPAYSPTSTAKN</sequence>
<accession>C6DH20</accession>
<organism>
    <name type="scientific">Pectobacterium carotovorum subsp. carotovorum (strain PC1)</name>
    <dbReference type="NCBI Taxonomy" id="561230"/>
    <lineage>
        <taxon>Bacteria</taxon>
        <taxon>Pseudomonadati</taxon>
        <taxon>Pseudomonadota</taxon>
        <taxon>Gammaproteobacteria</taxon>
        <taxon>Enterobacterales</taxon>
        <taxon>Pectobacteriaceae</taxon>
        <taxon>Pectobacterium</taxon>
    </lineage>
</organism>